<organism>
    <name type="scientific">Staphylococcus aureus (strain MRSA252)</name>
    <dbReference type="NCBI Taxonomy" id="282458"/>
    <lineage>
        <taxon>Bacteria</taxon>
        <taxon>Bacillati</taxon>
        <taxon>Bacillota</taxon>
        <taxon>Bacilli</taxon>
        <taxon>Bacillales</taxon>
        <taxon>Staphylococcaceae</taxon>
        <taxon>Staphylococcus</taxon>
    </lineage>
</organism>
<keyword id="KW-0227">DNA damage</keyword>
<keyword id="KW-0234">DNA repair</keyword>
<keyword id="KW-0378">Hydrolase</keyword>
<accession>Q6GE90</accession>
<gene>
    <name type="ordered locus">SAR2429</name>
</gene>
<feature type="chain" id="PRO_0000100106" description="Putative 3-methyladenine DNA glycosylase">
    <location>
        <begin position="1"/>
        <end position="202"/>
    </location>
</feature>
<evidence type="ECO:0000255" key="1">
    <source>
        <dbReference type="HAMAP-Rule" id="MF_00527"/>
    </source>
</evidence>
<name>3MGH_STAAR</name>
<protein>
    <recommendedName>
        <fullName evidence="1">Putative 3-methyladenine DNA glycosylase</fullName>
        <ecNumber evidence="1">3.2.2.-</ecNumber>
    </recommendedName>
</protein>
<comment type="similarity">
    <text evidence="1">Belongs to the DNA glycosylase MPG family.</text>
</comment>
<sequence>MDFVNNDTRQIAKNLLGVKVIYQDTTQTYTGYIVETEAYLGLNDRAAHGYGGKITPKVTSLYKRGGTIYAHVMHTHLLINFVTKSEGIPEGVLIRAIEPEDGLSAMFRNRGKKGYEVTNGPGKWTKAFNIPRAIDGARLNDCRLSIDTKNRKYPKDIIASPRIGIPNKGDWTHKSLRYTVKGNPFVSRMRKSDCMFPEDTWK</sequence>
<reference key="1">
    <citation type="journal article" date="2004" name="Proc. Natl. Acad. Sci. U.S.A.">
        <title>Complete genomes of two clinical Staphylococcus aureus strains: evidence for the rapid evolution of virulence and drug resistance.</title>
        <authorList>
            <person name="Holden M.T.G."/>
            <person name="Feil E.J."/>
            <person name="Lindsay J.A."/>
            <person name="Peacock S.J."/>
            <person name="Day N.P.J."/>
            <person name="Enright M.C."/>
            <person name="Foster T.J."/>
            <person name="Moore C.E."/>
            <person name="Hurst L."/>
            <person name="Atkin R."/>
            <person name="Barron A."/>
            <person name="Bason N."/>
            <person name="Bentley S.D."/>
            <person name="Chillingworth C."/>
            <person name="Chillingworth T."/>
            <person name="Churcher C."/>
            <person name="Clark L."/>
            <person name="Corton C."/>
            <person name="Cronin A."/>
            <person name="Doggett J."/>
            <person name="Dowd L."/>
            <person name="Feltwell T."/>
            <person name="Hance Z."/>
            <person name="Harris B."/>
            <person name="Hauser H."/>
            <person name="Holroyd S."/>
            <person name="Jagels K."/>
            <person name="James K.D."/>
            <person name="Lennard N."/>
            <person name="Line A."/>
            <person name="Mayes R."/>
            <person name="Moule S."/>
            <person name="Mungall K."/>
            <person name="Ormond D."/>
            <person name="Quail M.A."/>
            <person name="Rabbinowitsch E."/>
            <person name="Rutherford K.M."/>
            <person name="Sanders M."/>
            <person name="Sharp S."/>
            <person name="Simmonds M."/>
            <person name="Stevens K."/>
            <person name="Whitehead S."/>
            <person name="Barrell B.G."/>
            <person name="Spratt B.G."/>
            <person name="Parkhill J."/>
        </authorList>
    </citation>
    <scope>NUCLEOTIDE SEQUENCE [LARGE SCALE GENOMIC DNA]</scope>
    <source>
        <strain>MRSA252</strain>
    </source>
</reference>
<dbReference type="EC" id="3.2.2.-" evidence="1"/>
<dbReference type="EMBL" id="BX571856">
    <property type="protein sequence ID" value="CAG41411.1"/>
    <property type="molecule type" value="Genomic_DNA"/>
</dbReference>
<dbReference type="RefSeq" id="WP_000348296.1">
    <property type="nucleotide sequence ID" value="NC_002952.2"/>
</dbReference>
<dbReference type="SMR" id="Q6GE90"/>
<dbReference type="KEGG" id="sar:SAR2429"/>
<dbReference type="HOGENOM" id="CLU_060471_2_0_9"/>
<dbReference type="Proteomes" id="UP000000596">
    <property type="component" value="Chromosome"/>
</dbReference>
<dbReference type="GO" id="GO:0003905">
    <property type="term" value="F:alkylbase DNA N-glycosylase activity"/>
    <property type="evidence" value="ECO:0007669"/>
    <property type="project" value="InterPro"/>
</dbReference>
<dbReference type="GO" id="GO:0003677">
    <property type="term" value="F:DNA binding"/>
    <property type="evidence" value="ECO:0007669"/>
    <property type="project" value="InterPro"/>
</dbReference>
<dbReference type="GO" id="GO:0006284">
    <property type="term" value="P:base-excision repair"/>
    <property type="evidence" value="ECO:0007669"/>
    <property type="project" value="InterPro"/>
</dbReference>
<dbReference type="CDD" id="cd00540">
    <property type="entry name" value="AAG"/>
    <property type="match status" value="1"/>
</dbReference>
<dbReference type="FunFam" id="3.10.300.10:FF:000001">
    <property type="entry name" value="Putative 3-methyladenine DNA glycosylase"/>
    <property type="match status" value="1"/>
</dbReference>
<dbReference type="Gene3D" id="3.10.300.10">
    <property type="entry name" value="Methylpurine-DNA glycosylase (MPG)"/>
    <property type="match status" value="1"/>
</dbReference>
<dbReference type="HAMAP" id="MF_00527">
    <property type="entry name" value="3MGH"/>
    <property type="match status" value="1"/>
</dbReference>
<dbReference type="InterPro" id="IPR011034">
    <property type="entry name" value="Formyl_transferase-like_C_sf"/>
</dbReference>
<dbReference type="InterPro" id="IPR003180">
    <property type="entry name" value="MPG"/>
</dbReference>
<dbReference type="InterPro" id="IPR036995">
    <property type="entry name" value="MPG_sf"/>
</dbReference>
<dbReference type="NCBIfam" id="TIGR00567">
    <property type="entry name" value="3mg"/>
    <property type="match status" value="1"/>
</dbReference>
<dbReference type="PANTHER" id="PTHR10429">
    <property type="entry name" value="DNA-3-METHYLADENINE GLYCOSYLASE"/>
    <property type="match status" value="1"/>
</dbReference>
<dbReference type="PANTHER" id="PTHR10429:SF0">
    <property type="entry name" value="DNA-3-METHYLADENINE GLYCOSYLASE"/>
    <property type="match status" value="1"/>
</dbReference>
<dbReference type="Pfam" id="PF02245">
    <property type="entry name" value="Pur_DNA_glyco"/>
    <property type="match status" value="1"/>
</dbReference>
<dbReference type="SUPFAM" id="SSF50486">
    <property type="entry name" value="FMT C-terminal domain-like"/>
    <property type="match status" value="1"/>
</dbReference>
<proteinExistence type="inferred from homology"/>